<evidence type="ECO:0000250" key="1">
    <source>
        <dbReference type="UniProtKB" id="P61809"/>
    </source>
</evidence>
<evidence type="ECO:0000256" key="2">
    <source>
        <dbReference type="SAM" id="MobiDB-lite"/>
    </source>
</evidence>
<evidence type="ECO:0000269" key="3">
    <source>
    </source>
</evidence>
<evidence type="ECO:0000269" key="4">
    <source>
    </source>
</evidence>
<evidence type="ECO:0000269" key="5">
    <source>
    </source>
</evidence>
<evidence type="ECO:0000269" key="6">
    <source>
    </source>
</evidence>
<evidence type="ECO:0000305" key="7"/>
<evidence type="ECO:0000305" key="8">
    <source>
    </source>
</evidence>
<evidence type="ECO:0000305" key="9">
    <source>
    </source>
</evidence>
<evidence type="ECO:0000312" key="10">
    <source>
        <dbReference type="WormBase" id="T23F11.3a"/>
    </source>
</evidence>
<evidence type="ECO:0000312" key="11">
    <source>
        <dbReference type="WormBase" id="T23F11.3b"/>
    </source>
</evidence>
<feature type="chain" id="PRO_0000144176" description="Cyclin-dependent kinase 5 activator 1">
    <location>
        <begin position="1"/>
        <end position="356"/>
    </location>
</feature>
<feature type="region of interest" description="Disordered" evidence="2">
    <location>
        <begin position="1"/>
        <end position="53"/>
    </location>
</feature>
<feature type="region of interest" description="Disordered" evidence="2">
    <location>
        <begin position="66"/>
        <end position="99"/>
    </location>
</feature>
<feature type="compositionally biased region" description="Low complexity" evidence="2">
    <location>
        <begin position="40"/>
        <end position="49"/>
    </location>
</feature>
<feature type="compositionally biased region" description="Low complexity" evidence="2">
    <location>
        <begin position="71"/>
        <end position="92"/>
    </location>
</feature>
<feature type="splice variant" id="VSP_057774" description="In isoform b." evidence="7">
    <original>E</original>
    <variation>EKRGTKKTIIQ</variation>
    <location>
        <position position="203"/>
    </location>
</feature>
<comment type="function">
    <text evidence="1 3 4 5 6">Activator of the kinase cdk-5 (By similarity). In several motor neurons, promotes the polarized trafficking of synaptic vesicles and dense-core vesicles. In the ventral nerve cord, regulates the synaptic localization of the glutamate receptor, glr-1 (PubMed:17671168). In DA motor neurons, regulates axonal transport of synaptic vesicle precursors by inhibiting dynein-mediated retrograde transport (PubMed:20510931). Regulates the polarized distribution of dense-core vesicles in DB motor neurons (PubMed:22699897). May regulate these processes in association with cdk-5 (PubMed:17671168, PubMed:20510931). May also play a role in GABAergic synaptic vesicle localization in the ventral nerve cord (PubMed:16996038).</text>
</comment>
<comment type="subunit">
    <text evidence="9">Heterodimer composed of a catalytic subunit cdk-5 and a regulatory subunit cdka-1. Interaction with cdka-1 is required for cdk-5 activation.</text>
</comment>
<comment type="subcellular location">
    <subcellularLocation>
        <location evidence="5">Cytoplasm</location>
    </subcellularLocation>
    <subcellularLocation>
        <location evidence="5">Cell projection</location>
        <location evidence="5">Dendrite</location>
    </subcellularLocation>
    <subcellularLocation>
        <location evidence="5">Cell projection</location>
        <location evidence="5">Axon</location>
    </subcellularLocation>
    <text evidence="5">Presynaptic localization in the axon and punctate localization in the dendrite.</text>
</comment>
<comment type="alternative products">
    <event type="alternative splicing"/>
    <isoform>
        <id>Q22695-1</id>
        <name evidence="10">a</name>
        <sequence type="displayed"/>
    </isoform>
    <isoform>
        <id>Q22695-2</id>
        <name evidence="11">b</name>
        <sequence type="described" ref="VSP_057774"/>
    </isoform>
</comment>
<comment type="tissue specificity">
    <text evidence="3">Expressed in all classes of neurons in the ventral cord.</text>
</comment>
<comment type="disruption phenotype">
    <text evidence="3 5">Accumulation of presynaptic components in the dendrite of DA motor neurons (PubMed:20510931). RNAi-mediated knockdown results in an abnormal distribution of GABAergic synaptic vesicles at synaptic termini of the ventral nerve cord (PubMed:16996038). RNAi-mediated knockdown in combination with exposure to pentylenetetrazole, a GABA antagonist that induces seizures, results in an increased convulsion incidence as compared to wild-type animals (PubMed:16996038).</text>
</comment>
<comment type="similarity">
    <text evidence="7">Belongs to the cyclin-dependent kinase 5 activator family.</text>
</comment>
<keyword id="KW-0025">Alternative splicing</keyword>
<keyword id="KW-0966">Cell projection</keyword>
<keyword id="KW-0963">Cytoplasm</keyword>
<keyword id="KW-1185">Reference proteome</keyword>
<accession>Q22695</accession>
<accession>Q0G843</accession>
<dbReference type="EMBL" id="Z46343">
    <property type="protein sequence ID" value="CAA86458.2"/>
    <property type="molecule type" value="Genomic_DNA"/>
</dbReference>
<dbReference type="EMBL" id="Z46343">
    <property type="protein sequence ID" value="CAL36520.1"/>
    <property type="molecule type" value="Genomic_DNA"/>
</dbReference>
<dbReference type="PIR" id="T25178">
    <property type="entry name" value="T25178"/>
</dbReference>
<dbReference type="RefSeq" id="NP_001076649.1">
    <molecule id="Q22695-1"/>
    <property type="nucleotide sequence ID" value="NM_001083180.4"/>
</dbReference>
<dbReference type="RefSeq" id="NP_001076650.1">
    <molecule id="Q22695-2"/>
    <property type="nucleotide sequence ID" value="NM_001083181.6"/>
</dbReference>
<dbReference type="SMR" id="Q22695"/>
<dbReference type="BioGRID" id="53466">
    <property type="interactions" value="1"/>
</dbReference>
<dbReference type="ComplexPortal" id="CPX-4322">
    <property type="entry name" value="Cyclin-dependent protein kinase 5 holoenzyme complex"/>
</dbReference>
<dbReference type="FunCoup" id="Q22695">
    <property type="interactions" value="115"/>
</dbReference>
<dbReference type="IntAct" id="Q22695">
    <property type="interactions" value="1"/>
</dbReference>
<dbReference type="STRING" id="6239.T23F11.3b.2"/>
<dbReference type="PaxDb" id="6239-T23F11.3b.2"/>
<dbReference type="EnsemblMetazoa" id="T23F11.3a.1">
    <molecule id="Q22695-1"/>
    <property type="protein sequence ID" value="T23F11.3a.1"/>
    <property type="gene ID" value="WBGene00011955"/>
</dbReference>
<dbReference type="EnsemblMetazoa" id="T23F11.3b.1">
    <molecule id="Q22695-2"/>
    <property type="protein sequence ID" value="T23F11.3b.1"/>
    <property type="gene ID" value="WBGene00011955"/>
</dbReference>
<dbReference type="GeneID" id="188812"/>
<dbReference type="KEGG" id="cel:CELE_T23F11.3"/>
<dbReference type="UCSC" id="T23F11.3a.1">
    <property type="organism name" value="c. elegans"/>
</dbReference>
<dbReference type="AGR" id="WB:WBGene00011955"/>
<dbReference type="CTD" id="188812"/>
<dbReference type="WormBase" id="T23F11.3a">
    <molecule id="Q22695-1"/>
    <property type="protein sequence ID" value="CE33707"/>
    <property type="gene ID" value="WBGene00011955"/>
    <property type="gene designation" value="cdka-1"/>
</dbReference>
<dbReference type="WormBase" id="T23F11.3b">
    <molecule id="Q22695-2"/>
    <property type="protein sequence ID" value="CE01096"/>
    <property type="gene ID" value="WBGene00011955"/>
    <property type="gene designation" value="cdka-1"/>
</dbReference>
<dbReference type="eggNOG" id="KOG3932">
    <property type="taxonomic scope" value="Eukaryota"/>
</dbReference>
<dbReference type="GeneTree" id="ENSGT00390000008812"/>
<dbReference type="InParanoid" id="Q22695"/>
<dbReference type="OMA" id="PAQLVMW"/>
<dbReference type="OrthoDB" id="7676799at2759"/>
<dbReference type="Reactome" id="R-CEL-399956">
    <property type="pathway name" value="CRMPs in Sema3A signaling"/>
</dbReference>
<dbReference type="PRO" id="PR:Q22695"/>
<dbReference type="Proteomes" id="UP000001940">
    <property type="component" value="Chromosome III"/>
</dbReference>
<dbReference type="Bgee" id="WBGene00011955">
    <property type="expression patterns" value="Expressed in pharyngeal muscle cell (C elegans) and 3 other cell types or tissues"/>
</dbReference>
<dbReference type="GO" id="GO:1904115">
    <property type="term" value="C:axon cytoplasm"/>
    <property type="evidence" value="ECO:0007669"/>
    <property type="project" value="GOC"/>
</dbReference>
<dbReference type="GO" id="GO:0005737">
    <property type="term" value="C:cytoplasm"/>
    <property type="evidence" value="ECO:0000318"/>
    <property type="project" value="GO_Central"/>
</dbReference>
<dbReference type="GO" id="GO:0030425">
    <property type="term" value="C:dendrite"/>
    <property type="evidence" value="ECO:0007669"/>
    <property type="project" value="UniProtKB-SubCell"/>
</dbReference>
<dbReference type="GO" id="GO:0030426">
    <property type="term" value="C:growth cone"/>
    <property type="evidence" value="ECO:0000318"/>
    <property type="project" value="GO_Central"/>
</dbReference>
<dbReference type="GO" id="GO:0016533">
    <property type="term" value="C:protein kinase 5 complex"/>
    <property type="evidence" value="ECO:0000303"/>
    <property type="project" value="ComplexPortal"/>
</dbReference>
<dbReference type="GO" id="GO:0045202">
    <property type="term" value="C:synapse"/>
    <property type="evidence" value="ECO:0007669"/>
    <property type="project" value="GOC"/>
</dbReference>
<dbReference type="GO" id="GO:0061575">
    <property type="term" value="F:cyclin-dependent protein serine/threonine kinase activator activity"/>
    <property type="evidence" value="ECO:0000318"/>
    <property type="project" value="GO_Central"/>
</dbReference>
<dbReference type="GO" id="GO:0019901">
    <property type="term" value="F:protein kinase binding"/>
    <property type="evidence" value="ECO:0000318"/>
    <property type="project" value="GO_Central"/>
</dbReference>
<dbReference type="GO" id="GO:1990048">
    <property type="term" value="P:anterograde neuronal dense core vesicle transport"/>
    <property type="evidence" value="ECO:0000303"/>
    <property type="project" value="ComplexPortal"/>
</dbReference>
<dbReference type="GO" id="GO:0007411">
    <property type="term" value="P:axon guidance"/>
    <property type="evidence" value="ECO:0000318"/>
    <property type="project" value="GO_Central"/>
</dbReference>
<dbReference type="GO" id="GO:1904809">
    <property type="term" value="P:regulation of dense core granule transport"/>
    <property type="evidence" value="ECO:0000315"/>
    <property type="project" value="UniProtKB"/>
</dbReference>
<dbReference type="GO" id="GO:0032880">
    <property type="term" value="P:regulation of protein localization"/>
    <property type="evidence" value="ECO:0000315"/>
    <property type="project" value="WormBase"/>
</dbReference>
<dbReference type="GO" id="GO:1902803">
    <property type="term" value="P:regulation of synaptic vesicle transport"/>
    <property type="evidence" value="ECO:0000303"/>
    <property type="project" value="ComplexPortal"/>
</dbReference>
<dbReference type="GO" id="GO:0048491">
    <property type="term" value="P:retrograde synaptic vesicle transport"/>
    <property type="evidence" value="ECO:0000303"/>
    <property type="project" value="ComplexPortal"/>
</dbReference>
<dbReference type="GO" id="GO:0051932">
    <property type="term" value="P:synaptic transmission, GABAergic"/>
    <property type="evidence" value="ECO:0000315"/>
    <property type="project" value="WormBase"/>
</dbReference>
<dbReference type="GO" id="GO:0048489">
    <property type="term" value="P:synaptic vesicle transport"/>
    <property type="evidence" value="ECO:0000315"/>
    <property type="project" value="WormBase"/>
</dbReference>
<dbReference type="Gene3D" id="1.10.472.10">
    <property type="entry name" value="Cyclin-like"/>
    <property type="match status" value="1"/>
</dbReference>
<dbReference type="InterPro" id="IPR004944">
    <property type="entry name" value="CDK5_activator"/>
</dbReference>
<dbReference type="InterPro" id="IPR036915">
    <property type="entry name" value="Cyclin-like_sf"/>
</dbReference>
<dbReference type="PANTHER" id="PTHR23401">
    <property type="entry name" value="CYCLIN DEPENDANT KINASE-5 ACTIVATOR"/>
    <property type="match status" value="1"/>
</dbReference>
<dbReference type="PANTHER" id="PTHR23401:SF0">
    <property type="entry name" value="CYCLIN-DEPENDENT KINASE 5 ACTIVATOR"/>
    <property type="match status" value="1"/>
</dbReference>
<dbReference type="Pfam" id="PF03261">
    <property type="entry name" value="CDK5_activator"/>
    <property type="match status" value="1"/>
</dbReference>
<dbReference type="PIRSF" id="PIRSF009324">
    <property type="entry name" value="Cdk5_activator"/>
    <property type="match status" value="1"/>
</dbReference>
<dbReference type="SUPFAM" id="SSF47954">
    <property type="entry name" value="Cyclin-like"/>
    <property type="match status" value="1"/>
</dbReference>
<proteinExistence type="evidence at transcript level"/>
<name>CD5R1_CAEEL</name>
<organism>
    <name type="scientific">Caenorhabditis elegans</name>
    <dbReference type="NCBI Taxonomy" id="6239"/>
    <lineage>
        <taxon>Eukaryota</taxon>
        <taxon>Metazoa</taxon>
        <taxon>Ecdysozoa</taxon>
        <taxon>Nematoda</taxon>
        <taxon>Chromadorea</taxon>
        <taxon>Rhabditida</taxon>
        <taxon>Rhabditina</taxon>
        <taxon>Rhabditomorpha</taxon>
        <taxon>Rhabditoidea</taxon>
        <taxon>Rhabditidae</taxon>
        <taxon>Peloderinae</taxon>
        <taxon>Caenorhabditis</taxon>
    </lineage>
</organism>
<reference key="1">
    <citation type="journal article" date="1998" name="Science">
        <title>Genome sequence of the nematode C. elegans: a platform for investigating biology.</title>
        <authorList>
            <consortium name="The C. elegans sequencing consortium"/>
        </authorList>
    </citation>
    <scope>NUCLEOTIDE SEQUENCE [LARGE SCALE GENOMIC DNA]</scope>
    <source>
        <strain>Bristol N2</strain>
    </source>
</reference>
<reference key="2">
    <citation type="journal article" date="2006" name="Brain Res.">
        <title>Genetic interactions among cortical malformation genes that influence susceptibility to convulsions in C. elegans.</title>
        <authorList>
            <person name="Locke C.J."/>
            <person name="Williams S.N."/>
            <person name="Schwarz E.M."/>
            <person name="Caldwell G.A."/>
            <person name="Caldwell K.A."/>
        </authorList>
    </citation>
    <scope>FUNCTION</scope>
    <scope>TISSUE SPECIFICITY</scope>
    <scope>DISRUPTION PHENOTYPE</scope>
</reference>
<reference key="3">
    <citation type="journal article" date="2007" name="Mol. Biol. Cell">
        <title>CDK-5 regulates the abundance of GLR-1 glutamate receptors in the ventral cord of Caenorhabditis elegans.</title>
        <authorList>
            <person name="Juo P."/>
            <person name="Harbaugh T."/>
            <person name="Garriga G."/>
            <person name="Kaplan J.M."/>
        </authorList>
    </citation>
    <scope>FUNCTION</scope>
</reference>
<reference key="4">
    <citation type="journal article" date="2010" name="Cell">
        <title>Two cyclin-dependent kinase pathways are essential for polarized trafficking of presynaptic components.</title>
        <authorList>
            <person name="Ou C.Y."/>
            <person name="Poon V.Y."/>
            <person name="Maeder C.I."/>
            <person name="Watanabe S."/>
            <person name="Lehrman E.K."/>
            <person name="Fu A.K."/>
            <person name="Park M."/>
            <person name="Fu W.Y."/>
            <person name="Jorgensen E.M."/>
            <person name="Ip N.Y."/>
            <person name="Shen K."/>
        </authorList>
    </citation>
    <scope>FUNCTION</scope>
    <scope>SUBCELLULAR LOCATION</scope>
    <scope>DISRUPTION PHENOTYPE</scope>
</reference>
<reference key="5">
    <citation type="journal article" date="2012" name="J. Neurosci.">
        <title>Cyclin-dependent kinase 5 regulates the polarized trafficking of neuropeptide-containing dense-core vesicles in Caenorhabditis elegans motor neurons.</title>
        <authorList>
            <person name="Goodwin P.R."/>
            <person name="Sasaki J.M."/>
            <person name="Juo P."/>
        </authorList>
    </citation>
    <scope>FUNCTION</scope>
</reference>
<sequence length="356" mass="39875">MGANLTSPLPHHHRTQTTSVCNHLFSPGDGGPTFAPQRDSNTSSRSSSNAKESVLMQGWNWSKRNIQPVMSRRSLPKSGSSSEATSSKSSDSLVSFTRNVSTSTSSQYGKISISLDRNQNYKSVPRPSDTTTIIPNYYSLREEFRRGLQINTRQDLVNNNLASNDLSVIGSPKHVPRPRSVLRDDNANCDISPIAEQENVPSEASTSELLRGLGIFISNNCDVSDFDPAHLVTWLRSVDRSLLLQGWQDIAFINPANLVFIFLLVRDVLPDERHLIHTLEELHAWILSCLYVSYSYMGNEISYPLKPFLIGNDRNTFWNRCVAMVTSHSRQMLLLNSSSTFFSEVFTDLKHCSSSE</sequence>
<protein>
    <recommendedName>
        <fullName>Cyclin-dependent kinase 5 activator 1</fullName>
    </recommendedName>
    <alternativeName>
        <fullName evidence="8">p35</fullName>
    </alternativeName>
</protein>
<gene>
    <name evidence="10" type="primary">cdka-1</name>
    <name evidence="10" type="ORF">T23F11.3</name>
</gene>